<sequence length="301" mass="33325">ITMNTLNQQYEEKVRPCIDLIDSLRSLGVEKDLALPAIAVIGDQSSGKSSVLEALSGVALPRGSGIVTRCPLELKMKRRQEGEEWYGKISYQDCEKEIEDPADVEKKIRDAQDEMAGVGVGISDDLISLEIASPDVPDLTLIDLPGIARVAVKGQPENIGDQIKRLIQKFIKRQETISLVVVPCNVDIATTEALKMAQEVDPDGERTLGILTKPDLVDKGTEETVVDIVHNEVIPLKKGYMIVRCRGQKDITDKVSLTEAIEREKAFFNDHVHFQTLYNDGHATVPKLAEKLTLELVHHIE</sequence>
<reference key="1">
    <citation type="journal article" date="1989" name="Mol. Cell. Biol.">
        <title>A double-stranded RNA-inducible fish gene homologous to the murine influenza virus resistance gene Mx.</title>
        <authorList>
            <person name="Staeheli P."/>
            <person name="Yu Y.X."/>
            <person name="Grob R."/>
            <person name="Haller O."/>
        </authorList>
    </citation>
    <scope>NUCLEOTIDE SEQUENCE [GENOMIC DNA]</scope>
</reference>
<name>MX_PERFL</name>
<dbReference type="EMBL" id="M27252">
    <property type="protein sequence ID" value="AAA72778.1"/>
    <property type="molecule type" value="Genomic_DNA"/>
</dbReference>
<dbReference type="PIR" id="A32498">
    <property type="entry name" value="A32498"/>
</dbReference>
<dbReference type="SMR" id="P20593"/>
<dbReference type="GO" id="GO:0005737">
    <property type="term" value="C:cytoplasm"/>
    <property type="evidence" value="ECO:0007669"/>
    <property type="project" value="UniProtKB-SubCell"/>
</dbReference>
<dbReference type="GO" id="GO:0005874">
    <property type="term" value="C:microtubule"/>
    <property type="evidence" value="ECO:0007669"/>
    <property type="project" value="TreeGrafter"/>
</dbReference>
<dbReference type="GO" id="GO:0005634">
    <property type="term" value="C:nucleus"/>
    <property type="evidence" value="ECO:0007669"/>
    <property type="project" value="TreeGrafter"/>
</dbReference>
<dbReference type="GO" id="GO:0005886">
    <property type="term" value="C:plasma membrane"/>
    <property type="evidence" value="ECO:0007669"/>
    <property type="project" value="TreeGrafter"/>
</dbReference>
<dbReference type="GO" id="GO:0098793">
    <property type="term" value="C:presynapse"/>
    <property type="evidence" value="ECO:0007669"/>
    <property type="project" value="GOC"/>
</dbReference>
<dbReference type="GO" id="GO:0005525">
    <property type="term" value="F:GTP binding"/>
    <property type="evidence" value="ECO:0007669"/>
    <property type="project" value="UniProtKB-KW"/>
</dbReference>
<dbReference type="GO" id="GO:0003924">
    <property type="term" value="F:GTPase activity"/>
    <property type="evidence" value="ECO:0007669"/>
    <property type="project" value="InterPro"/>
</dbReference>
<dbReference type="GO" id="GO:0008017">
    <property type="term" value="F:microtubule binding"/>
    <property type="evidence" value="ECO:0007669"/>
    <property type="project" value="TreeGrafter"/>
</dbReference>
<dbReference type="GO" id="GO:0051607">
    <property type="term" value="P:defense response to virus"/>
    <property type="evidence" value="ECO:0007669"/>
    <property type="project" value="TreeGrafter"/>
</dbReference>
<dbReference type="GO" id="GO:0031623">
    <property type="term" value="P:receptor internalization"/>
    <property type="evidence" value="ECO:0007669"/>
    <property type="project" value="TreeGrafter"/>
</dbReference>
<dbReference type="GO" id="GO:0016185">
    <property type="term" value="P:synaptic vesicle budding from presynaptic endocytic zone membrane"/>
    <property type="evidence" value="ECO:0007669"/>
    <property type="project" value="TreeGrafter"/>
</dbReference>
<dbReference type="CDD" id="cd08771">
    <property type="entry name" value="DLP_1"/>
    <property type="match status" value="1"/>
</dbReference>
<dbReference type="FunFam" id="3.40.50.300:FF:000621">
    <property type="entry name" value="Interferon-induced GTP-binding protein Mx1"/>
    <property type="match status" value="1"/>
</dbReference>
<dbReference type="Gene3D" id="3.40.50.300">
    <property type="entry name" value="P-loop containing nucleotide triphosphate hydrolases"/>
    <property type="match status" value="1"/>
</dbReference>
<dbReference type="InterPro" id="IPR022812">
    <property type="entry name" value="Dynamin"/>
</dbReference>
<dbReference type="InterPro" id="IPR001401">
    <property type="entry name" value="Dynamin_GTPase"/>
</dbReference>
<dbReference type="InterPro" id="IPR019762">
    <property type="entry name" value="Dynamin_GTPase_CS"/>
</dbReference>
<dbReference type="InterPro" id="IPR045063">
    <property type="entry name" value="Dynamin_N"/>
</dbReference>
<dbReference type="InterPro" id="IPR000375">
    <property type="entry name" value="Dynamin_stalk"/>
</dbReference>
<dbReference type="InterPro" id="IPR030381">
    <property type="entry name" value="G_DYNAMIN_dom"/>
</dbReference>
<dbReference type="InterPro" id="IPR027417">
    <property type="entry name" value="P-loop_NTPase"/>
</dbReference>
<dbReference type="PANTHER" id="PTHR11566">
    <property type="entry name" value="DYNAMIN"/>
    <property type="match status" value="1"/>
</dbReference>
<dbReference type="PANTHER" id="PTHR11566:SF225">
    <property type="entry name" value="INTERFERON-INDUCED GTP-BINDING PROTEIN MX-RELATED"/>
    <property type="match status" value="1"/>
</dbReference>
<dbReference type="Pfam" id="PF01031">
    <property type="entry name" value="Dynamin_M"/>
    <property type="match status" value="1"/>
</dbReference>
<dbReference type="Pfam" id="PF00350">
    <property type="entry name" value="Dynamin_N"/>
    <property type="match status" value="1"/>
</dbReference>
<dbReference type="PRINTS" id="PR00195">
    <property type="entry name" value="DYNAMIN"/>
</dbReference>
<dbReference type="SMART" id="SM00053">
    <property type="entry name" value="DYNc"/>
    <property type="match status" value="1"/>
</dbReference>
<dbReference type="SUPFAM" id="SSF52540">
    <property type="entry name" value="P-loop containing nucleoside triphosphate hydrolases"/>
    <property type="match status" value="1"/>
</dbReference>
<dbReference type="PROSITE" id="PS00410">
    <property type="entry name" value="G_DYNAMIN_1"/>
    <property type="match status" value="1"/>
</dbReference>
<dbReference type="PROSITE" id="PS51718">
    <property type="entry name" value="G_DYNAMIN_2"/>
    <property type="match status" value="1"/>
</dbReference>
<accession>P20593</accession>
<evidence type="ECO:0000250" key="1"/>
<evidence type="ECO:0000255" key="2"/>
<evidence type="ECO:0000255" key="3">
    <source>
        <dbReference type="PROSITE-ProRule" id="PRU01055"/>
    </source>
</evidence>
<comment type="subcellular location">
    <subcellularLocation>
        <location evidence="1">Cytoplasm</location>
    </subcellularLocation>
</comment>
<comment type="induction">
    <text>By interferons.</text>
</comment>
<comment type="similarity">
    <text evidence="3">Belongs to the TRAFAC class dynamin-like GTPase superfamily. Dynamin/Fzo/YdjA family.</text>
</comment>
<gene>
    <name type="primary">mx</name>
</gene>
<feature type="chain" id="PRO_0000206605" description="Interferon-induced GTP-binding protein Mx">
    <location>
        <begin position="1" status="less than"/>
        <end position="301"/>
    </location>
</feature>
<feature type="domain" description="Dynamin-type G" evidence="3">
    <location>
        <begin position="32"/>
        <end position="301" status="greater than"/>
    </location>
</feature>
<feature type="region of interest" description="G1 motif" evidence="3">
    <location>
        <begin position="42"/>
        <end position="49"/>
    </location>
</feature>
<feature type="region of interest" description="G2 motif" evidence="3">
    <location>
        <begin position="67"/>
        <end position="69"/>
    </location>
</feature>
<feature type="region of interest" description="G3 motif" evidence="3">
    <location>
        <begin position="143"/>
        <end position="146"/>
    </location>
</feature>
<feature type="region of interest" description="G4 motif" evidence="3">
    <location>
        <begin position="212"/>
        <end position="215"/>
    </location>
</feature>
<feature type="region of interest" description="G5 motif" evidence="3">
    <location>
        <begin position="244"/>
        <end position="247"/>
    </location>
</feature>
<feature type="binding site" evidence="2">
    <location>
        <begin position="42"/>
        <end position="49"/>
    </location>
    <ligand>
        <name>GTP</name>
        <dbReference type="ChEBI" id="CHEBI:37565"/>
    </ligand>
</feature>
<feature type="binding site" evidence="2">
    <location>
        <begin position="143"/>
        <end position="147"/>
    </location>
    <ligand>
        <name>GTP</name>
        <dbReference type="ChEBI" id="CHEBI:37565"/>
    </ligand>
</feature>
<feature type="binding site" evidence="2">
    <location>
        <begin position="212"/>
        <end position="215"/>
    </location>
    <ligand>
        <name>GTP</name>
        <dbReference type="ChEBI" id="CHEBI:37565"/>
    </ligand>
</feature>
<feature type="non-terminal residue">
    <location>
        <position position="1"/>
    </location>
</feature>
<feature type="non-terminal residue">
    <location>
        <position position="301"/>
    </location>
</feature>
<keyword id="KW-0963">Cytoplasm</keyword>
<keyword id="KW-0342">GTP-binding</keyword>
<keyword id="KW-0547">Nucleotide-binding</keyword>
<protein>
    <recommendedName>
        <fullName>Interferon-induced GTP-binding protein Mx</fullName>
    </recommendedName>
    <alternativeName>
        <fullName>Interferon-inducible Mx protein</fullName>
    </alternativeName>
</protein>
<proteinExistence type="evidence at transcript level"/>
<organism>
    <name type="scientific">Perca fluviatilis</name>
    <name type="common">European perch</name>
    <dbReference type="NCBI Taxonomy" id="8168"/>
    <lineage>
        <taxon>Eukaryota</taxon>
        <taxon>Metazoa</taxon>
        <taxon>Chordata</taxon>
        <taxon>Craniata</taxon>
        <taxon>Vertebrata</taxon>
        <taxon>Euteleostomi</taxon>
        <taxon>Actinopterygii</taxon>
        <taxon>Neopterygii</taxon>
        <taxon>Teleostei</taxon>
        <taxon>Neoteleostei</taxon>
        <taxon>Acanthomorphata</taxon>
        <taxon>Eupercaria</taxon>
        <taxon>Perciformes</taxon>
        <taxon>Percoidei</taxon>
        <taxon>Percidae</taxon>
        <taxon>Percinae</taxon>
        <taxon>Perca</taxon>
    </lineage>
</organism>